<reference key="1">
    <citation type="journal article" date="2007" name="Curr. Biol.">
        <title>Reduced genome of the thioautotrophic intracellular symbiont in a deep-sea clam, Calyptogena okutanii.</title>
        <authorList>
            <person name="Kuwahara H."/>
            <person name="Yoshida T."/>
            <person name="Takaki Y."/>
            <person name="Shimamura S."/>
            <person name="Nishi S."/>
            <person name="Harada M."/>
            <person name="Matsuyama K."/>
            <person name="Takishita K."/>
            <person name="Kawato M."/>
            <person name="Uematsu K."/>
            <person name="Fujiwara Y."/>
            <person name="Sato T."/>
            <person name="Kato C."/>
            <person name="Kitagawa M."/>
            <person name="Kato I."/>
            <person name="Maruyama T."/>
        </authorList>
    </citation>
    <scope>NUCLEOTIDE SEQUENCE [LARGE SCALE GENOMIC DNA]</scope>
    <source>
        <strain>HA</strain>
    </source>
</reference>
<evidence type="ECO:0000255" key="1">
    <source>
        <dbReference type="HAMAP-Rule" id="MF_00693"/>
    </source>
</evidence>
<accession>A5CX42</accession>
<protein>
    <recommendedName>
        <fullName evidence="1">Probable transcriptional regulatory protein COSY_0365</fullName>
    </recommendedName>
</protein>
<proteinExistence type="inferred from homology"/>
<sequence>MAGHSKWHNIQHRKGIQDVKRGKIFAKFIKEIIIATKTGGSVIENNPSLRMVIDRALAANMKRNTIENAVKRGSCDLDDKNYDEVRYEGYGLAGTAIIVDTLTDNRNRTVANIRHAFSKYGGNLSIEGSVSYLFIKQGFINFETGDEEQIMEVALDAGAKDIITNDNGSIYVITTTEDFFTIRNTLITARLEPSHSEVTMKPINYIKLNLHNTEKFIKLTDSLKDLDDTREVYHNADISDEIITQF</sequence>
<name>Y365_VESOH</name>
<gene>
    <name type="ordered locus">COSY_0365</name>
</gene>
<keyword id="KW-0963">Cytoplasm</keyword>
<keyword id="KW-0238">DNA-binding</keyword>
<keyword id="KW-1185">Reference proteome</keyword>
<keyword id="KW-0804">Transcription</keyword>
<keyword id="KW-0805">Transcription regulation</keyword>
<organism>
    <name type="scientific">Vesicomyosocius okutanii subsp. Calyptogena okutanii (strain HA)</name>
    <dbReference type="NCBI Taxonomy" id="412965"/>
    <lineage>
        <taxon>Bacteria</taxon>
        <taxon>Pseudomonadati</taxon>
        <taxon>Pseudomonadota</taxon>
        <taxon>Gammaproteobacteria</taxon>
        <taxon>Candidatus Pseudothioglobaceae</taxon>
        <taxon>Candidatus Vesicomyosocius</taxon>
    </lineage>
</organism>
<dbReference type="EMBL" id="AP009247">
    <property type="protein sequence ID" value="BAF61490.1"/>
    <property type="molecule type" value="Genomic_DNA"/>
</dbReference>
<dbReference type="RefSeq" id="WP_011929760.1">
    <property type="nucleotide sequence ID" value="NC_009465.1"/>
</dbReference>
<dbReference type="SMR" id="A5CX42"/>
<dbReference type="STRING" id="412965.COSY_0365"/>
<dbReference type="KEGG" id="vok:COSY_0365"/>
<dbReference type="eggNOG" id="COG0217">
    <property type="taxonomic scope" value="Bacteria"/>
</dbReference>
<dbReference type="HOGENOM" id="CLU_062974_2_2_6"/>
<dbReference type="OrthoDB" id="9781053at2"/>
<dbReference type="Proteomes" id="UP000000247">
    <property type="component" value="Chromosome"/>
</dbReference>
<dbReference type="GO" id="GO:0005829">
    <property type="term" value="C:cytosol"/>
    <property type="evidence" value="ECO:0007669"/>
    <property type="project" value="TreeGrafter"/>
</dbReference>
<dbReference type="GO" id="GO:0003677">
    <property type="term" value="F:DNA binding"/>
    <property type="evidence" value="ECO:0007669"/>
    <property type="project" value="UniProtKB-UniRule"/>
</dbReference>
<dbReference type="GO" id="GO:0006355">
    <property type="term" value="P:regulation of DNA-templated transcription"/>
    <property type="evidence" value="ECO:0007669"/>
    <property type="project" value="UniProtKB-UniRule"/>
</dbReference>
<dbReference type="FunFam" id="1.10.10.200:FF:000002">
    <property type="entry name" value="Probable transcriptional regulatory protein CLM62_37755"/>
    <property type="match status" value="1"/>
</dbReference>
<dbReference type="FunFam" id="3.30.70.980:FF:000002">
    <property type="entry name" value="Probable transcriptional regulatory protein YebC"/>
    <property type="match status" value="1"/>
</dbReference>
<dbReference type="Gene3D" id="1.10.10.200">
    <property type="match status" value="1"/>
</dbReference>
<dbReference type="Gene3D" id="3.30.70.980">
    <property type="match status" value="2"/>
</dbReference>
<dbReference type="HAMAP" id="MF_00693">
    <property type="entry name" value="Transcrip_reg_TACO1"/>
    <property type="match status" value="1"/>
</dbReference>
<dbReference type="InterPro" id="IPR017856">
    <property type="entry name" value="Integrase-like_N"/>
</dbReference>
<dbReference type="InterPro" id="IPR048300">
    <property type="entry name" value="TACO1_YebC-like_2nd/3rd_dom"/>
</dbReference>
<dbReference type="InterPro" id="IPR049083">
    <property type="entry name" value="TACO1_YebC_N"/>
</dbReference>
<dbReference type="InterPro" id="IPR002876">
    <property type="entry name" value="Transcrip_reg_TACO1-like"/>
</dbReference>
<dbReference type="InterPro" id="IPR026564">
    <property type="entry name" value="Transcrip_reg_TACO1-like_dom3"/>
</dbReference>
<dbReference type="InterPro" id="IPR029072">
    <property type="entry name" value="YebC-like"/>
</dbReference>
<dbReference type="NCBIfam" id="NF001030">
    <property type="entry name" value="PRK00110.1"/>
    <property type="match status" value="1"/>
</dbReference>
<dbReference type="NCBIfam" id="NF009044">
    <property type="entry name" value="PRK12378.1"/>
    <property type="match status" value="1"/>
</dbReference>
<dbReference type="NCBIfam" id="TIGR01033">
    <property type="entry name" value="YebC/PmpR family DNA-binding transcriptional regulator"/>
    <property type="match status" value="1"/>
</dbReference>
<dbReference type="PANTHER" id="PTHR12532:SF6">
    <property type="entry name" value="TRANSCRIPTIONAL REGULATORY PROTEIN YEBC-RELATED"/>
    <property type="match status" value="1"/>
</dbReference>
<dbReference type="PANTHER" id="PTHR12532">
    <property type="entry name" value="TRANSLATIONAL ACTIVATOR OF CYTOCHROME C OXIDASE 1"/>
    <property type="match status" value="1"/>
</dbReference>
<dbReference type="Pfam" id="PF20772">
    <property type="entry name" value="TACO1_YebC_N"/>
    <property type="match status" value="1"/>
</dbReference>
<dbReference type="Pfam" id="PF01709">
    <property type="entry name" value="Transcrip_reg"/>
    <property type="match status" value="1"/>
</dbReference>
<dbReference type="SUPFAM" id="SSF75625">
    <property type="entry name" value="YebC-like"/>
    <property type="match status" value="1"/>
</dbReference>
<comment type="subcellular location">
    <subcellularLocation>
        <location evidence="1">Cytoplasm</location>
    </subcellularLocation>
</comment>
<comment type="similarity">
    <text evidence="1">Belongs to the TACO1 family.</text>
</comment>
<feature type="chain" id="PRO_1000045391" description="Probable transcriptional regulatory protein COSY_0365">
    <location>
        <begin position="1"/>
        <end position="246"/>
    </location>
</feature>